<proteinExistence type="inferred from homology"/>
<feature type="chain" id="PRO_1000066693" description="Acyl carrier protein">
    <location>
        <begin position="1"/>
        <end position="77"/>
    </location>
</feature>
<feature type="domain" description="Carrier" evidence="2">
    <location>
        <begin position="2"/>
        <end position="77"/>
    </location>
</feature>
<feature type="modified residue" description="O-(pantetheine 4'-phosphoryl)serine" evidence="2">
    <location>
        <position position="37"/>
    </location>
</feature>
<evidence type="ECO:0000255" key="1">
    <source>
        <dbReference type="HAMAP-Rule" id="MF_01217"/>
    </source>
</evidence>
<evidence type="ECO:0000255" key="2">
    <source>
        <dbReference type="PROSITE-ProRule" id="PRU00258"/>
    </source>
</evidence>
<sequence length="77" mass="8393">MSDVADRVKKIVVEHLGVEEDKVTENASFIDDLGADSLDTVELVMAFEEEFGIEIPDDAAETIQTFGDAVKFISEAS</sequence>
<name>ACP_RUEPO</name>
<protein>
    <recommendedName>
        <fullName evidence="1">Acyl carrier protein</fullName>
        <shortName evidence="1">ACP</shortName>
    </recommendedName>
</protein>
<keyword id="KW-0963">Cytoplasm</keyword>
<keyword id="KW-0275">Fatty acid biosynthesis</keyword>
<keyword id="KW-0276">Fatty acid metabolism</keyword>
<keyword id="KW-0444">Lipid biosynthesis</keyword>
<keyword id="KW-0443">Lipid metabolism</keyword>
<keyword id="KW-0596">Phosphopantetheine</keyword>
<keyword id="KW-0597">Phosphoprotein</keyword>
<keyword id="KW-1185">Reference proteome</keyword>
<dbReference type="EMBL" id="CP000031">
    <property type="protein sequence ID" value="AAV95538.1"/>
    <property type="molecule type" value="Genomic_DNA"/>
</dbReference>
<dbReference type="RefSeq" id="WP_005982462.1">
    <property type="nucleotide sequence ID" value="NC_003911.12"/>
</dbReference>
<dbReference type="SMR" id="Q5LR57"/>
<dbReference type="STRING" id="246200.SPO2274"/>
<dbReference type="PaxDb" id="246200-SPO2274"/>
<dbReference type="KEGG" id="sil:SPO2274"/>
<dbReference type="eggNOG" id="COG0236">
    <property type="taxonomic scope" value="Bacteria"/>
</dbReference>
<dbReference type="HOGENOM" id="CLU_108696_5_1_5"/>
<dbReference type="OrthoDB" id="9804551at2"/>
<dbReference type="UniPathway" id="UPA00094"/>
<dbReference type="Proteomes" id="UP000001023">
    <property type="component" value="Chromosome"/>
</dbReference>
<dbReference type="GO" id="GO:0005829">
    <property type="term" value="C:cytosol"/>
    <property type="evidence" value="ECO:0007669"/>
    <property type="project" value="TreeGrafter"/>
</dbReference>
<dbReference type="GO" id="GO:0016020">
    <property type="term" value="C:membrane"/>
    <property type="evidence" value="ECO:0007669"/>
    <property type="project" value="GOC"/>
</dbReference>
<dbReference type="GO" id="GO:0000035">
    <property type="term" value="F:acyl binding"/>
    <property type="evidence" value="ECO:0007669"/>
    <property type="project" value="TreeGrafter"/>
</dbReference>
<dbReference type="GO" id="GO:0000036">
    <property type="term" value="F:acyl carrier activity"/>
    <property type="evidence" value="ECO:0007669"/>
    <property type="project" value="UniProtKB-UniRule"/>
</dbReference>
<dbReference type="GO" id="GO:0009245">
    <property type="term" value="P:lipid A biosynthetic process"/>
    <property type="evidence" value="ECO:0007669"/>
    <property type="project" value="TreeGrafter"/>
</dbReference>
<dbReference type="FunFam" id="1.10.1200.10:FF:000001">
    <property type="entry name" value="Acyl carrier protein"/>
    <property type="match status" value="1"/>
</dbReference>
<dbReference type="Gene3D" id="1.10.1200.10">
    <property type="entry name" value="ACP-like"/>
    <property type="match status" value="1"/>
</dbReference>
<dbReference type="HAMAP" id="MF_01217">
    <property type="entry name" value="Acyl_carrier"/>
    <property type="match status" value="1"/>
</dbReference>
<dbReference type="InterPro" id="IPR003231">
    <property type="entry name" value="ACP"/>
</dbReference>
<dbReference type="InterPro" id="IPR036736">
    <property type="entry name" value="ACP-like_sf"/>
</dbReference>
<dbReference type="InterPro" id="IPR009081">
    <property type="entry name" value="PP-bd_ACP"/>
</dbReference>
<dbReference type="InterPro" id="IPR006162">
    <property type="entry name" value="Ppantetheine_attach_site"/>
</dbReference>
<dbReference type="NCBIfam" id="TIGR00517">
    <property type="entry name" value="acyl_carrier"/>
    <property type="match status" value="1"/>
</dbReference>
<dbReference type="NCBIfam" id="NF002148">
    <property type="entry name" value="PRK00982.1-2"/>
    <property type="match status" value="1"/>
</dbReference>
<dbReference type="NCBIfam" id="NF002149">
    <property type="entry name" value="PRK00982.1-3"/>
    <property type="match status" value="1"/>
</dbReference>
<dbReference type="NCBIfam" id="NF002150">
    <property type="entry name" value="PRK00982.1-4"/>
    <property type="match status" value="1"/>
</dbReference>
<dbReference type="NCBIfam" id="NF002151">
    <property type="entry name" value="PRK00982.1-5"/>
    <property type="match status" value="1"/>
</dbReference>
<dbReference type="PANTHER" id="PTHR20863">
    <property type="entry name" value="ACYL CARRIER PROTEIN"/>
    <property type="match status" value="1"/>
</dbReference>
<dbReference type="PANTHER" id="PTHR20863:SF76">
    <property type="entry name" value="CARRIER DOMAIN-CONTAINING PROTEIN"/>
    <property type="match status" value="1"/>
</dbReference>
<dbReference type="Pfam" id="PF00550">
    <property type="entry name" value="PP-binding"/>
    <property type="match status" value="1"/>
</dbReference>
<dbReference type="SUPFAM" id="SSF47336">
    <property type="entry name" value="ACP-like"/>
    <property type="match status" value="1"/>
</dbReference>
<dbReference type="PROSITE" id="PS50075">
    <property type="entry name" value="CARRIER"/>
    <property type="match status" value="1"/>
</dbReference>
<dbReference type="PROSITE" id="PS00012">
    <property type="entry name" value="PHOSPHOPANTETHEINE"/>
    <property type="match status" value="1"/>
</dbReference>
<organism>
    <name type="scientific">Ruegeria pomeroyi (strain ATCC 700808 / DSM 15171 / DSS-3)</name>
    <name type="common">Silicibacter pomeroyi</name>
    <dbReference type="NCBI Taxonomy" id="246200"/>
    <lineage>
        <taxon>Bacteria</taxon>
        <taxon>Pseudomonadati</taxon>
        <taxon>Pseudomonadota</taxon>
        <taxon>Alphaproteobacteria</taxon>
        <taxon>Rhodobacterales</taxon>
        <taxon>Roseobacteraceae</taxon>
        <taxon>Ruegeria</taxon>
    </lineage>
</organism>
<accession>Q5LR57</accession>
<reference key="1">
    <citation type="journal article" date="2004" name="Nature">
        <title>Genome sequence of Silicibacter pomeroyi reveals adaptations to the marine environment.</title>
        <authorList>
            <person name="Moran M.A."/>
            <person name="Buchan A."/>
            <person name="Gonzalez J.M."/>
            <person name="Heidelberg J.F."/>
            <person name="Whitman W.B."/>
            <person name="Kiene R.P."/>
            <person name="Henriksen J.R."/>
            <person name="King G.M."/>
            <person name="Belas R."/>
            <person name="Fuqua C."/>
            <person name="Brinkac L.M."/>
            <person name="Lewis M."/>
            <person name="Johri S."/>
            <person name="Weaver B."/>
            <person name="Pai G."/>
            <person name="Eisen J.A."/>
            <person name="Rahe E."/>
            <person name="Sheldon W.M."/>
            <person name="Ye W."/>
            <person name="Miller T.R."/>
            <person name="Carlton J."/>
            <person name="Rasko D.A."/>
            <person name="Paulsen I.T."/>
            <person name="Ren Q."/>
            <person name="Daugherty S.C."/>
            <person name="DeBoy R.T."/>
            <person name="Dodson R.J."/>
            <person name="Durkin A.S."/>
            <person name="Madupu R."/>
            <person name="Nelson W.C."/>
            <person name="Sullivan S.A."/>
            <person name="Rosovitz M.J."/>
            <person name="Haft D.H."/>
            <person name="Selengut J."/>
            <person name="Ward N."/>
        </authorList>
    </citation>
    <scope>NUCLEOTIDE SEQUENCE [LARGE SCALE GENOMIC DNA]</scope>
    <source>
        <strain>ATCC 700808 / DSM 15171 / DSS-3</strain>
    </source>
</reference>
<reference key="2">
    <citation type="journal article" date="2014" name="Stand. Genomic Sci.">
        <title>An updated genome annotation for the model marine bacterium Ruegeria pomeroyi DSS-3.</title>
        <authorList>
            <person name="Rivers A.R."/>
            <person name="Smith C.B."/>
            <person name="Moran M.A."/>
        </authorList>
    </citation>
    <scope>GENOME REANNOTATION</scope>
    <source>
        <strain>ATCC 700808 / DSM 15171 / DSS-3</strain>
    </source>
</reference>
<gene>
    <name evidence="1" type="primary">acpP</name>
    <name type="ordered locus">SPO2274</name>
</gene>
<comment type="function">
    <text evidence="1">Carrier of the growing fatty acid chain in fatty acid biosynthesis.</text>
</comment>
<comment type="pathway">
    <text evidence="1">Lipid metabolism; fatty acid biosynthesis.</text>
</comment>
<comment type="subcellular location">
    <subcellularLocation>
        <location evidence="1">Cytoplasm</location>
    </subcellularLocation>
</comment>
<comment type="PTM">
    <text evidence="1">4'-phosphopantetheine is transferred from CoA to a specific serine of apo-ACP by AcpS. This modification is essential for activity because fatty acids are bound in thioester linkage to the sulfhydryl of the prosthetic group.</text>
</comment>
<comment type="similarity">
    <text evidence="1">Belongs to the acyl carrier protein (ACP) family.</text>
</comment>